<protein>
    <recommendedName>
        <fullName evidence="1">1-pyrroline-5-carboxylate dehydrogenase</fullName>
        <shortName evidence="1">P5C dehydrogenase</shortName>
        <ecNumber evidence="1">1.2.1.88</ecNumber>
    </recommendedName>
    <alternativeName>
        <fullName evidence="1">L-glutamate gamma-semialdehyde dehydrogenase</fullName>
    </alternativeName>
</protein>
<dbReference type="EC" id="1.2.1.88" evidence="1"/>
<dbReference type="EMBL" id="BA000017">
    <property type="protein sequence ID" value="BAB58716.1"/>
    <property type="molecule type" value="Genomic_DNA"/>
</dbReference>
<dbReference type="SMR" id="P63939"/>
<dbReference type="KEGG" id="sav:SAV2554"/>
<dbReference type="HOGENOM" id="CLU_005391_0_0_9"/>
<dbReference type="PhylomeDB" id="P63939"/>
<dbReference type="UniPathway" id="UPA00261">
    <property type="reaction ID" value="UER00374"/>
</dbReference>
<dbReference type="Proteomes" id="UP000002481">
    <property type="component" value="Chromosome"/>
</dbReference>
<dbReference type="GO" id="GO:0009898">
    <property type="term" value="C:cytoplasmic side of plasma membrane"/>
    <property type="evidence" value="ECO:0007669"/>
    <property type="project" value="TreeGrafter"/>
</dbReference>
<dbReference type="GO" id="GO:0003842">
    <property type="term" value="F:1-pyrroline-5-carboxylate dehydrogenase activity"/>
    <property type="evidence" value="ECO:0007669"/>
    <property type="project" value="UniProtKB-UniRule"/>
</dbReference>
<dbReference type="GO" id="GO:0006537">
    <property type="term" value="P:glutamate biosynthetic process"/>
    <property type="evidence" value="ECO:0007669"/>
    <property type="project" value="UniProtKB-UniRule"/>
</dbReference>
<dbReference type="GO" id="GO:0010133">
    <property type="term" value="P:proline catabolic process to glutamate"/>
    <property type="evidence" value="ECO:0007669"/>
    <property type="project" value="UniProtKB-UniPathway"/>
</dbReference>
<dbReference type="CDD" id="cd07124">
    <property type="entry name" value="ALDH_PutA-P5CDH-RocA"/>
    <property type="match status" value="1"/>
</dbReference>
<dbReference type="FunFam" id="3.40.309.10:FF:000005">
    <property type="entry name" value="1-pyrroline-5-carboxylate dehydrogenase 1"/>
    <property type="match status" value="1"/>
</dbReference>
<dbReference type="FunFam" id="3.40.605.10:FF:000045">
    <property type="entry name" value="1-pyrroline-5-carboxylate dehydrogenase 1"/>
    <property type="match status" value="1"/>
</dbReference>
<dbReference type="Gene3D" id="3.40.605.10">
    <property type="entry name" value="Aldehyde Dehydrogenase, Chain A, domain 1"/>
    <property type="match status" value="1"/>
</dbReference>
<dbReference type="Gene3D" id="3.40.309.10">
    <property type="entry name" value="Aldehyde Dehydrogenase, Chain A, domain 2"/>
    <property type="match status" value="1"/>
</dbReference>
<dbReference type="HAMAP" id="MF_00733">
    <property type="entry name" value="RocA"/>
    <property type="match status" value="1"/>
</dbReference>
<dbReference type="InterPro" id="IPR016161">
    <property type="entry name" value="Ald_DH/histidinol_DH"/>
</dbReference>
<dbReference type="InterPro" id="IPR016163">
    <property type="entry name" value="Ald_DH_C"/>
</dbReference>
<dbReference type="InterPro" id="IPR016160">
    <property type="entry name" value="Ald_DH_CS_CYS"/>
</dbReference>
<dbReference type="InterPro" id="IPR029510">
    <property type="entry name" value="Ald_DH_CS_GLU"/>
</dbReference>
<dbReference type="InterPro" id="IPR016162">
    <property type="entry name" value="Ald_DH_N"/>
</dbReference>
<dbReference type="InterPro" id="IPR015590">
    <property type="entry name" value="Aldehyde_DH_dom"/>
</dbReference>
<dbReference type="InterPro" id="IPR050485">
    <property type="entry name" value="Proline_metab_enzyme"/>
</dbReference>
<dbReference type="InterPro" id="IPR005932">
    <property type="entry name" value="RocA"/>
</dbReference>
<dbReference type="InterPro" id="IPR047597">
    <property type="entry name" value="RocA_bacillales"/>
</dbReference>
<dbReference type="NCBIfam" id="TIGR01237">
    <property type="entry name" value="D1pyr5carbox2"/>
    <property type="match status" value="1"/>
</dbReference>
<dbReference type="NCBIfam" id="NF002852">
    <property type="entry name" value="PRK03137.1"/>
    <property type="match status" value="1"/>
</dbReference>
<dbReference type="PANTHER" id="PTHR42862">
    <property type="entry name" value="DELTA-1-PYRROLINE-5-CARBOXYLATE DEHYDROGENASE 1, ISOFORM A-RELATED"/>
    <property type="match status" value="1"/>
</dbReference>
<dbReference type="PANTHER" id="PTHR42862:SF1">
    <property type="entry name" value="DELTA-1-PYRROLINE-5-CARBOXYLATE DEHYDROGENASE 2, ISOFORM A-RELATED"/>
    <property type="match status" value="1"/>
</dbReference>
<dbReference type="Pfam" id="PF00171">
    <property type="entry name" value="Aldedh"/>
    <property type="match status" value="1"/>
</dbReference>
<dbReference type="SUPFAM" id="SSF53720">
    <property type="entry name" value="ALDH-like"/>
    <property type="match status" value="1"/>
</dbReference>
<dbReference type="PROSITE" id="PS00070">
    <property type="entry name" value="ALDEHYDE_DEHYDR_CYS"/>
    <property type="match status" value="1"/>
</dbReference>
<dbReference type="PROSITE" id="PS00687">
    <property type="entry name" value="ALDEHYDE_DEHYDR_GLU"/>
    <property type="match status" value="1"/>
</dbReference>
<comment type="catalytic activity">
    <reaction evidence="1">
        <text>L-glutamate 5-semialdehyde + NAD(+) + H2O = L-glutamate + NADH + 2 H(+)</text>
        <dbReference type="Rhea" id="RHEA:30235"/>
        <dbReference type="ChEBI" id="CHEBI:15377"/>
        <dbReference type="ChEBI" id="CHEBI:15378"/>
        <dbReference type="ChEBI" id="CHEBI:29985"/>
        <dbReference type="ChEBI" id="CHEBI:57540"/>
        <dbReference type="ChEBI" id="CHEBI:57945"/>
        <dbReference type="ChEBI" id="CHEBI:58066"/>
        <dbReference type="EC" id="1.2.1.88"/>
    </reaction>
</comment>
<comment type="pathway">
    <text evidence="1">Amino-acid degradation; L-proline degradation into L-glutamate; L-glutamate from L-proline: step 2/2.</text>
</comment>
<comment type="similarity">
    <text evidence="1">Belongs to the aldehyde dehydrogenase family. RocA subfamily.</text>
</comment>
<feature type="chain" id="PRO_0000056515" description="1-pyrroline-5-carboxylate dehydrogenase">
    <location>
        <begin position="1"/>
        <end position="514"/>
    </location>
</feature>
<feature type="active site" evidence="1">
    <location>
        <position position="286"/>
    </location>
</feature>
<feature type="active site" evidence="1">
    <location>
        <position position="320"/>
    </location>
</feature>
<reference key="1">
    <citation type="journal article" date="2001" name="Lancet">
        <title>Whole genome sequencing of meticillin-resistant Staphylococcus aureus.</title>
        <authorList>
            <person name="Kuroda M."/>
            <person name="Ohta T."/>
            <person name="Uchiyama I."/>
            <person name="Baba T."/>
            <person name="Yuzawa H."/>
            <person name="Kobayashi I."/>
            <person name="Cui L."/>
            <person name="Oguchi A."/>
            <person name="Aoki K."/>
            <person name="Nagai Y."/>
            <person name="Lian J.-Q."/>
            <person name="Ito T."/>
            <person name="Kanamori M."/>
            <person name="Matsumaru H."/>
            <person name="Maruyama A."/>
            <person name="Murakami H."/>
            <person name="Hosoyama A."/>
            <person name="Mizutani-Ui Y."/>
            <person name="Takahashi N.K."/>
            <person name="Sawano T."/>
            <person name="Inoue R."/>
            <person name="Kaito C."/>
            <person name="Sekimizu K."/>
            <person name="Hirakawa H."/>
            <person name="Kuhara S."/>
            <person name="Goto S."/>
            <person name="Yabuzaki J."/>
            <person name="Kanehisa M."/>
            <person name="Yamashita A."/>
            <person name="Oshima K."/>
            <person name="Furuya K."/>
            <person name="Yoshino C."/>
            <person name="Shiba T."/>
            <person name="Hattori M."/>
            <person name="Ogasawara N."/>
            <person name="Hayashi H."/>
            <person name="Hiramatsu K."/>
        </authorList>
    </citation>
    <scope>NUCLEOTIDE SEQUENCE [LARGE SCALE GENOMIC DNA]</scope>
    <source>
        <strain>Mu50 / ATCC 700699</strain>
    </source>
</reference>
<evidence type="ECO:0000255" key="1">
    <source>
        <dbReference type="HAMAP-Rule" id="MF_00733"/>
    </source>
</evidence>
<organism>
    <name type="scientific">Staphylococcus aureus (strain Mu50 / ATCC 700699)</name>
    <dbReference type="NCBI Taxonomy" id="158878"/>
    <lineage>
        <taxon>Bacteria</taxon>
        <taxon>Bacillati</taxon>
        <taxon>Bacillota</taxon>
        <taxon>Bacilli</taxon>
        <taxon>Bacillales</taxon>
        <taxon>Staphylococcaceae</taxon>
        <taxon>Staphylococcus</taxon>
    </lineage>
</organism>
<sequence>MVVEFKNEPGYDFSVQENVDMFKKALKDVEKELGQDIPLVINGEKIFKDDKIKSINPADTSQVIANASKATKQDVEDAFKAANEAYKSWKTWSANDRAELMLRVSAIIRRRKAEIAAIMVYEAGKPWDEAVGDAAEGIDFIEYYARSMMDLAQGKPVLDREGEHNKYFYKSIGTGVTIPPWNFPFAIMAGTTLAPVVAGNTVLLKPAEDTPYIAYKLMEILEEAGLPKGVVNFVPGDPKEIGDYLVDHKDTHFVTFTGSRATGTRIYERSAVVQEGQNFLKRVIAEMGGKDAIVVDENIDTDMAAEAIVTSAFGFSGQKCSACSRAIVHKDVYDEVLEKSIKLTKELTLGNTVDNTYMGPVINKKQFDKIKNYIEIGKEEGKLEQGGGTDDSKGYFVEPTIISGLKSKDRIMQEEIFGPVVGFVKVNDFDEAIEVANDTDYGLTGAVITNNREHWIKAVNEFDVGNLYLNRGCTSAVVGYHPFGGFKMSGTDAKTGSPDYLLHFLEQKVVSEMF</sequence>
<accession>P63939</accession>
<accession>Q99R82</accession>
<keyword id="KW-0520">NAD</keyword>
<keyword id="KW-0560">Oxidoreductase</keyword>
<proteinExistence type="inferred from homology"/>
<name>ROCA_STAAM</name>
<gene>
    <name evidence="1" type="primary">rocA</name>
    <name type="ordered locus">SAV2554</name>
</gene>